<proteinExistence type="evidence at protein level"/>
<evidence type="ECO:0000269" key="1">
    <source>
    </source>
</evidence>
<evidence type="ECO:0000303" key="2">
    <source>
    </source>
</evidence>
<evidence type="ECO:0000303" key="3">
    <source>
    </source>
</evidence>
<evidence type="ECO:0000303" key="4">
    <source>
    </source>
</evidence>
<evidence type="ECO:0000305" key="5"/>
<evidence type="ECO:0000305" key="6">
    <source>
    </source>
</evidence>
<gene>
    <name evidence="3" type="primary">vspIM</name>
</gene>
<comment type="function">
    <text evidence="1 2 6">A gamma subtype methylase, recognizes the double-stranded sequence 5'-ATTAAT-3', methylates A-5 on both strands, and protects the DNA from cleavage by the VspI endonuclease.</text>
</comment>
<comment type="catalytic activity">
    <reaction evidence="1">
        <text>a 2'-deoxyadenosine in DNA + S-adenosyl-L-methionine = an N(6)-methyl-2'-deoxyadenosine in DNA + S-adenosyl-L-homocysteine + H(+)</text>
        <dbReference type="Rhea" id="RHEA:15197"/>
        <dbReference type="Rhea" id="RHEA-COMP:12418"/>
        <dbReference type="Rhea" id="RHEA-COMP:12419"/>
        <dbReference type="ChEBI" id="CHEBI:15378"/>
        <dbReference type="ChEBI" id="CHEBI:57856"/>
        <dbReference type="ChEBI" id="CHEBI:59789"/>
        <dbReference type="ChEBI" id="CHEBI:90615"/>
        <dbReference type="ChEBI" id="CHEBI:90616"/>
        <dbReference type="EC" id="2.1.1.72"/>
    </reaction>
</comment>
<comment type="similarity">
    <text evidence="5">Belongs to the N(4)/N(6)-methyltransferase family.</text>
</comment>
<dbReference type="EC" id="2.1.1.72" evidence="1"/>
<dbReference type="EMBL" id="X68658">
    <property type="protein sequence ID" value="CAA48625.1"/>
    <property type="molecule type" value="Genomic_DNA"/>
</dbReference>
<dbReference type="PIR" id="S33683">
    <property type="entry name" value="S33683"/>
</dbReference>
<dbReference type="SMR" id="Q03055"/>
<dbReference type="REBASE" id="3525">
    <property type="entry name" value="M.VspI"/>
</dbReference>
<dbReference type="PRO" id="PR:Q03055"/>
<dbReference type="GO" id="GO:0003677">
    <property type="term" value="F:DNA binding"/>
    <property type="evidence" value="ECO:0007669"/>
    <property type="project" value="UniProtKB-KW"/>
</dbReference>
<dbReference type="GO" id="GO:0008170">
    <property type="term" value="F:N-methyltransferase activity"/>
    <property type="evidence" value="ECO:0007669"/>
    <property type="project" value="InterPro"/>
</dbReference>
<dbReference type="GO" id="GO:0009007">
    <property type="term" value="F:site-specific DNA-methyltransferase (adenine-specific) activity"/>
    <property type="evidence" value="ECO:0007669"/>
    <property type="project" value="UniProtKB-EC"/>
</dbReference>
<dbReference type="GO" id="GO:0009307">
    <property type="term" value="P:DNA restriction-modification system"/>
    <property type="evidence" value="ECO:0007669"/>
    <property type="project" value="UniProtKB-KW"/>
</dbReference>
<dbReference type="GO" id="GO:0032259">
    <property type="term" value="P:methylation"/>
    <property type="evidence" value="ECO:0007669"/>
    <property type="project" value="UniProtKB-KW"/>
</dbReference>
<dbReference type="CDD" id="cd02440">
    <property type="entry name" value="AdoMet_MTases"/>
    <property type="match status" value="1"/>
</dbReference>
<dbReference type="Gene3D" id="3.40.50.150">
    <property type="entry name" value="Vaccinia Virus protein VP39"/>
    <property type="match status" value="1"/>
</dbReference>
<dbReference type="InterPro" id="IPR003356">
    <property type="entry name" value="DNA_methylase_A-5"/>
</dbReference>
<dbReference type="InterPro" id="IPR002052">
    <property type="entry name" value="DNA_methylase_N6_adenine_CS"/>
</dbReference>
<dbReference type="InterPro" id="IPR050953">
    <property type="entry name" value="N4_N6_ade-DNA_methylase"/>
</dbReference>
<dbReference type="InterPro" id="IPR029063">
    <property type="entry name" value="SAM-dependent_MTases_sf"/>
</dbReference>
<dbReference type="PANTHER" id="PTHR33841:SF1">
    <property type="entry name" value="DNA METHYLTRANSFERASE A"/>
    <property type="match status" value="1"/>
</dbReference>
<dbReference type="PANTHER" id="PTHR33841">
    <property type="entry name" value="DNA METHYLTRANSFERASE YEEA-RELATED"/>
    <property type="match status" value="1"/>
</dbReference>
<dbReference type="Pfam" id="PF02384">
    <property type="entry name" value="N6_Mtase"/>
    <property type="match status" value="1"/>
</dbReference>
<dbReference type="PRINTS" id="PR00507">
    <property type="entry name" value="N12N6MTFRASE"/>
</dbReference>
<dbReference type="SUPFAM" id="SSF53335">
    <property type="entry name" value="S-adenosyl-L-methionine-dependent methyltransferases"/>
    <property type="match status" value="1"/>
</dbReference>
<dbReference type="PROSITE" id="PS00092">
    <property type="entry name" value="N6_MTASE"/>
    <property type="match status" value="1"/>
</dbReference>
<sequence length="408" mass="45507">MKQSALFEADDVEAISIDDVAFSLNVSSASVRNWIKTGYLHKATKNSVTAESFVAFKDEILGTEKLNQRANKSLKDQHDHSGLEEMIHNIIRSNEVHPEGLSDIYEESLSESYKNKEGVFYTPKEIAADFFDYLPKDCSELTFCDPCCGTGNFLIEAVKRGFKPCNIYGYDIDEVALEISRSRLKELCGVAESNIEKRDFLSASYQIEQKYDVIFTNPPWGKKLPKKDKDSLADSLATGNSKDTSAIFFFASMKILNSSGYLGFLLQDAFFNIASYESVRKAALANQIVALIDFGKPFKGLLTKAKGIILRKQCPDDQHATICVSGNTKNEVSQRVFEKNPKSIFNFTCSELDLEVVEHILSIPHKTLRGSARWGLGIVTGNNKKFCLPEARGGYIPVYKGSDITRKG</sequence>
<name>MTV1_VIBS3</name>
<keyword id="KW-0238">DNA-binding</keyword>
<keyword id="KW-0489">Methyltransferase</keyword>
<keyword id="KW-0680">Restriction system</keyword>
<keyword id="KW-0949">S-adenosyl-L-methionine</keyword>
<keyword id="KW-0808">Transferase</keyword>
<protein>
    <recommendedName>
        <fullName evidence="2">Type II methyltransferase M.VspI</fullName>
        <shortName evidence="4">M.VspI</shortName>
        <ecNumber evidence="1">2.1.1.72</ecNumber>
    </recommendedName>
    <alternativeName>
        <fullName>Adenine-specific methyltransferase VspI</fullName>
    </alternativeName>
    <alternativeName>
        <fullName>Modification methylase VspI</fullName>
    </alternativeName>
</protein>
<reference key="1">
    <citation type="journal article" date="1993" name="Nucleic Acids Res.">
        <title>Vspl methylase belongs to m6A-gamma class of adenine methylases.</title>
        <authorList>
            <person name="Degtyarev S.K."/>
            <person name="Prikhod'Ko E.A."/>
            <person name="Prikhod'Ko G.G."/>
            <person name="Krasnykh V.N."/>
        </authorList>
    </citation>
    <scope>NUCLEOTIDE SEQUENCE [GENOMIC DNA]</scope>
    <scope>FUNCTION</scope>
    <source>
        <strain>343</strain>
    </source>
</reference>
<reference key="2">
    <citation type="journal article" date="1995" name="Gene">
        <title>Biochemical characterization of VspI methyltransferase.</title>
        <authorList>
            <person name="Degtyarev S.K."/>
            <person name="Prikhod'Ko E.A."/>
            <person name="Rechkunova N.I."/>
            <person name="Prikhod'Ko G.G."/>
            <person name="Krasnykh V.N."/>
        </authorList>
    </citation>
    <scope>FUNCTION</scope>
    <scope>CATALYTIC ACTIVITY</scope>
</reference>
<reference key="3">
    <citation type="journal article" date="2003" name="Nucleic Acids Res.">
        <title>A nomenclature for restriction enzymes, DNA methyltransferases, homing endonucleases and their genes.</title>
        <authorList>
            <person name="Roberts R.J."/>
            <person name="Belfort M."/>
            <person name="Bestor T."/>
            <person name="Bhagwat A.S."/>
            <person name="Bickle T.A."/>
            <person name="Bitinaite J."/>
            <person name="Blumenthal R.M."/>
            <person name="Degtyarev S.K."/>
            <person name="Dryden D.T."/>
            <person name="Dybvig K."/>
            <person name="Firman K."/>
            <person name="Gromova E.S."/>
            <person name="Gumport R.I."/>
            <person name="Halford S.E."/>
            <person name="Hattman S."/>
            <person name="Heitman J."/>
            <person name="Hornby D.P."/>
            <person name="Janulaitis A."/>
            <person name="Jeltsch A."/>
            <person name="Josephsen J."/>
            <person name="Kiss A."/>
            <person name="Klaenhammer T.R."/>
            <person name="Kobayashi I."/>
            <person name="Kong H."/>
            <person name="Krueger D.H."/>
            <person name="Lacks S."/>
            <person name="Marinus M.G."/>
            <person name="Miyahara M."/>
            <person name="Morgan R.D."/>
            <person name="Murray N.E."/>
            <person name="Nagaraja V."/>
            <person name="Piekarowicz A."/>
            <person name="Pingoud A."/>
            <person name="Raleigh E."/>
            <person name="Rao D.N."/>
            <person name="Reich N."/>
            <person name="Repin V.E."/>
            <person name="Selker E.U."/>
            <person name="Shaw P.C."/>
            <person name="Stein D.C."/>
            <person name="Stoddard B.L."/>
            <person name="Szybalski W."/>
            <person name="Trautner T.A."/>
            <person name="Van Etten J.L."/>
            <person name="Vitor J.M."/>
            <person name="Wilson G.G."/>
            <person name="Xu S.Y."/>
        </authorList>
    </citation>
    <scope>NOMENCLATURE</scope>
    <scope>SUBTYPE</scope>
</reference>
<organism>
    <name type="scientific">Vibrio sp. (strain 343)</name>
    <dbReference type="NCBI Taxonomy" id="29496"/>
    <lineage>
        <taxon>Bacteria</taxon>
        <taxon>Pseudomonadati</taxon>
        <taxon>Pseudomonadota</taxon>
        <taxon>Gammaproteobacteria</taxon>
        <taxon>Vibrionales</taxon>
        <taxon>Vibrionaceae</taxon>
        <taxon>Vibrio</taxon>
    </lineage>
</organism>
<accession>Q03055</accession>
<feature type="chain" id="PRO_0000087982" description="Type II methyltransferase M.VspI">
    <location>
        <begin position="1"/>
        <end position="408"/>
    </location>
</feature>